<gene>
    <name type="ORF">ORF9</name>
</gene>
<evidence type="ECO:0000250" key="1"/>
<evidence type="ECO:0000255" key="2"/>
<evidence type="ECO:0000305" key="3"/>
<sequence length="78" mass="8761">MIKLVLLVAAIAIFGTGFITVIINQFTSAKNIIMDLYNSDTWLIWLFGRMAVLFSHPLMLTISSLYIVGFIVSKTLYS</sequence>
<reference key="1">
    <citation type="journal article" date="1996" name="Curr. Microbiol.">
        <title>Spiroplasma citri Virus SpV1: Characterization of viral sequences present in the spiroplasmal host chromosome.</title>
        <authorList>
            <person name="Bebear C.M."/>
            <person name="Aullo P."/>
            <person name="Bove J."/>
            <person name="Renaudin J."/>
        </authorList>
    </citation>
    <scope>NUCLEOTIDE SEQUENCE [GENOMIC DNA]</scope>
</reference>
<organism>
    <name type="scientific">Spiroplasma virus SpV1-C74</name>
    <name type="common">SpV1</name>
    <dbReference type="NCBI Taxonomy" id="185959"/>
    <lineage>
        <taxon>Viruses</taxon>
        <taxon>Monodnaviria</taxon>
        <taxon>Loebvirae</taxon>
        <taxon>Hofneiviricota</taxon>
        <taxon>Faserviricetes</taxon>
        <taxon>Tubulavirales</taxon>
        <taxon>Plectroviridae</taxon>
        <taxon>Vespertiliovirus</taxon>
        <taxon>Vespertiliovirus C74</taxon>
    </lineage>
</organism>
<protein>
    <recommendedName>
        <fullName>Putative capsid protein ORF9</fullName>
    </recommendedName>
</protein>
<dbReference type="EMBL" id="U28974">
    <property type="protein sequence ID" value="AAA85009.1"/>
    <property type="molecule type" value="Genomic_DNA"/>
</dbReference>
<dbReference type="RefSeq" id="NP_620623.1">
    <property type="nucleotide sequence ID" value="NC_003793.1"/>
</dbReference>
<dbReference type="KEGG" id="vg:944357"/>
<dbReference type="OrthoDB" id="21799at10239"/>
<dbReference type="Proteomes" id="UP000001764">
    <property type="component" value="Genome"/>
</dbReference>
<dbReference type="GO" id="GO:0019029">
    <property type="term" value="C:helical viral capsid"/>
    <property type="evidence" value="ECO:0007669"/>
    <property type="project" value="UniProtKB-KW"/>
</dbReference>
<dbReference type="GO" id="GO:0033644">
    <property type="term" value="C:host cell membrane"/>
    <property type="evidence" value="ECO:0007669"/>
    <property type="project" value="UniProtKB-SubCell"/>
</dbReference>
<dbReference type="GO" id="GO:0016020">
    <property type="term" value="C:membrane"/>
    <property type="evidence" value="ECO:0007669"/>
    <property type="project" value="UniProtKB-KW"/>
</dbReference>
<feature type="signal peptide" evidence="2">
    <location>
        <begin position="1"/>
        <end position="29"/>
    </location>
</feature>
<feature type="chain" id="PRO_0000372068" description="Putative capsid protein ORF9">
    <location>
        <begin position="30"/>
        <end position="78"/>
    </location>
</feature>
<feature type="transmembrane region" description="Helical" evidence="2">
    <location>
        <begin position="52"/>
        <end position="72"/>
    </location>
</feature>
<organismHost>
    <name type="scientific">Spiroplasma melliferum</name>
    <dbReference type="NCBI Taxonomy" id="2134"/>
</organismHost>
<accession>Q76TT7</accession>
<proteinExistence type="inferred from homology"/>
<comment type="function">
    <text evidence="1">May self assemble to form a helical capsid wrapping up the viral genomic DNA. The virion assembly and budding take place at the host inner membrane (By similarity).</text>
</comment>
<comment type="subunit">
    <text evidence="1">Homomultimerizes.</text>
</comment>
<comment type="subcellular location">
    <subcellularLocation>
        <location>Virion</location>
    </subcellularLocation>
    <subcellularLocation>
        <location evidence="3">Host membrane</location>
        <topology evidence="3">Single-pass membrane protein</topology>
    </subcellularLocation>
    <text evidence="1">Prior to assembly, the major capsid protein is found associated with the bacterial host inner membrane.</text>
</comment>
<comment type="similarity">
    <text evidence="3">Belongs to the plectrovirus ORF9 family.</text>
</comment>
<name>CAPSD_SPV1C</name>
<keyword id="KW-0167">Capsid protein</keyword>
<keyword id="KW-1139">Helical capsid protein</keyword>
<keyword id="KW-1043">Host membrane</keyword>
<keyword id="KW-0472">Membrane</keyword>
<keyword id="KW-1185">Reference proteome</keyword>
<keyword id="KW-0732">Signal</keyword>
<keyword id="KW-0812">Transmembrane</keyword>
<keyword id="KW-1133">Transmembrane helix</keyword>
<keyword id="KW-0946">Virion</keyword>